<sequence>MRSKPRIALIAHDRKKDDIVAFAGRHRDFLAQCDLLATGTTGGRIAAETGLPVARMLSGPWGGDLQIGAQLAEGRVTAVVFLRDPMTPQPHEPDINALVRACDVHNVPCATNLATAELVVVELARICFEEDQAAADDAAP</sequence>
<comment type="function">
    <text evidence="1">Catalyzes the formation of methylglyoxal from dihydroxyacetone phosphate.</text>
</comment>
<comment type="catalytic activity">
    <reaction evidence="1">
        <text>dihydroxyacetone phosphate = methylglyoxal + phosphate</text>
        <dbReference type="Rhea" id="RHEA:17937"/>
        <dbReference type="ChEBI" id="CHEBI:17158"/>
        <dbReference type="ChEBI" id="CHEBI:43474"/>
        <dbReference type="ChEBI" id="CHEBI:57642"/>
        <dbReference type="EC" id="4.2.3.3"/>
    </reaction>
</comment>
<comment type="similarity">
    <text evidence="1">Belongs to the methylglyoxal synthase family.</text>
</comment>
<keyword id="KW-0456">Lyase</keyword>
<keyword id="KW-1185">Reference proteome</keyword>
<reference key="1">
    <citation type="journal article" date="2010" name="PLoS ONE">
        <title>The complete genome sequence of Cupriavidus metallidurans strain CH34, a master survivalist in harsh and anthropogenic environments.</title>
        <authorList>
            <person name="Janssen P.J."/>
            <person name="Van Houdt R."/>
            <person name="Moors H."/>
            <person name="Monsieurs P."/>
            <person name="Morin N."/>
            <person name="Michaux A."/>
            <person name="Benotmane M.A."/>
            <person name="Leys N."/>
            <person name="Vallaeys T."/>
            <person name="Lapidus A."/>
            <person name="Monchy S."/>
            <person name="Medigue C."/>
            <person name="Taghavi S."/>
            <person name="McCorkle S."/>
            <person name="Dunn J."/>
            <person name="van der Lelie D."/>
            <person name="Mergeay M."/>
        </authorList>
    </citation>
    <scope>NUCLEOTIDE SEQUENCE [LARGE SCALE GENOMIC DNA]</scope>
    <source>
        <strain>ATCC 43123 / DSM 2839 / NBRC 102507 / CH34</strain>
    </source>
</reference>
<protein>
    <recommendedName>
        <fullName evidence="1">Methylglyoxal synthase</fullName>
        <shortName evidence="1">MGS</shortName>
        <ecNumber evidence="1">4.2.3.3</ecNumber>
    </recommendedName>
</protein>
<evidence type="ECO:0000255" key="1">
    <source>
        <dbReference type="HAMAP-Rule" id="MF_00549"/>
    </source>
</evidence>
<name>MGSA_CUPMC</name>
<accession>Q1LQ98</accession>
<dbReference type="EC" id="4.2.3.3" evidence="1"/>
<dbReference type="EMBL" id="CP000352">
    <property type="protein sequence ID" value="ABF07678.1"/>
    <property type="molecule type" value="Genomic_DNA"/>
</dbReference>
<dbReference type="RefSeq" id="WP_011515630.1">
    <property type="nucleotide sequence ID" value="NC_007973.1"/>
</dbReference>
<dbReference type="SMR" id="Q1LQ98"/>
<dbReference type="STRING" id="266264.Rmet_0792"/>
<dbReference type="KEGG" id="rme:Rmet_0792"/>
<dbReference type="eggNOG" id="COG1803">
    <property type="taxonomic scope" value="Bacteria"/>
</dbReference>
<dbReference type="HOGENOM" id="CLU_120420_1_0_4"/>
<dbReference type="Proteomes" id="UP000002429">
    <property type="component" value="Chromosome"/>
</dbReference>
<dbReference type="GO" id="GO:0005829">
    <property type="term" value="C:cytosol"/>
    <property type="evidence" value="ECO:0007669"/>
    <property type="project" value="TreeGrafter"/>
</dbReference>
<dbReference type="GO" id="GO:0008929">
    <property type="term" value="F:methylglyoxal synthase activity"/>
    <property type="evidence" value="ECO:0007669"/>
    <property type="project" value="UniProtKB-UniRule"/>
</dbReference>
<dbReference type="GO" id="GO:0019242">
    <property type="term" value="P:methylglyoxal biosynthetic process"/>
    <property type="evidence" value="ECO:0007669"/>
    <property type="project" value="UniProtKB-UniRule"/>
</dbReference>
<dbReference type="CDD" id="cd01422">
    <property type="entry name" value="MGS"/>
    <property type="match status" value="1"/>
</dbReference>
<dbReference type="Gene3D" id="3.40.50.1380">
    <property type="entry name" value="Methylglyoxal synthase-like domain"/>
    <property type="match status" value="1"/>
</dbReference>
<dbReference type="HAMAP" id="MF_00549">
    <property type="entry name" value="Methylglyoxal_synth"/>
    <property type="match status" value="1"/>
</dbReference>
<dbReference type="InterPro" id="IPR004363">
    <property type="entry name" value="Methylgl_synth"/>
</dbReference>
<dbReference type="InterPro" id="IPR018148">
    <property type="entry name" value="Methylglyoxal_synth_AS"/>
</dbReference>
<dbReference type="InterPro" id="IPR011607">
    <property type="entry name" value="MGS-like_dom"/>
</dbReference>
<dbReference type="InterPro" id="IPR036914">
    <property type="entry name" value="MGS-like_dom_sf"/>
</dbReference>
<dbReference type="NCBIfam" id="TIGR00160">
    <property type="entry name" value="MGSA"/>
    <property type="match status" value="1"/>
</dbReference>
<dbReference type="NCBIfam" id="NF003559">
    <property type="entry name" value="PRK05234.1"/>
    <property type="match status" value="1"/>
</dbReference>
<dbReference type="PANTHER" id="PTHR30492">
    <property type="entry name" value="METHYLGLYOXAL SYNTHASE"/>
    <property type="match status" value="1"/>
</dbReference>
<dbReference type="PANTHER" id="PTHR30492:SF0">
    <property type="entry name" value="METHYLGLYOXAL SYNTHASE"/>
    <property type="match status" value="1"/>
</dbReference>
<dbReference type="Pfam" id="PF02142">
    <property type="entry name" value="MGS"/>
    <property type="match status" value="1"/>
</dbReference>
<dbReference type="PIRSF" id="PIRSF006614">
    <property type="entry name" value="Methylglyox_syn"/>
    <property type="match status" value="1"/>
</dbReference>
<dbReference type="SMART" id="SM00851">
    <property type="entry name" value="MGS"/>
    <property type="match status" value="1"/>
</dbReference>
<dbReference type="SUPFAM" id="SSF52335">
    <property type="entry name" value="Methylglyoxal synthase-like"/>
    <property type="match status" value="1"/>
</dbReference>
<dbReference type="PROSITE" id="PS01335">
    <property type="entry name" value="METHYLGLYOXAL_SYNTH"/>
    <property type="match status" value="1"/>
</dbReference>
<dbReference type="PROSITE" id="PS51855">
    <property type="entry name" value="MGS"/>
    <property type="match status" value="1"/>
</dbReference>
<organism>
    <name type="scientific">Cupriavidus metallidurans (strain ATCC 43123 / DSM 2839 / NBRC 102507 / CH34)</name>
    <name type="common">Ralstonia metallidurans</name>
    <dbReference type="NCBI Taxonomy" id="266264"/>
    <lineage>
        <taxon>Bacteria</taxon>
        <taxon>Pseudomonadati</taxon>
        <taxon>Pseudomonadota</taxon>
        <taxon>Betaproteobacteria</taxon>
        <taxon>Burkholderiales</taxon>
        <taxon>Burkholderiaceae</taxon>
        <taxon>Cupriavidus</taxon>
    </lineage>
</organism>
<proteinExistence type="inferred from homology"/>
<gene>
    <name evidence="1" type="primary">mgsA</name>
    <name type="ordered locus">Rmet_0792</name>
</gene>
<feature type="chain" id="PRO_1000017824" description="Methylglyoxal synthase">
    <location>
        <begin position="1"/>
        <end position="140"/>
    </location>
</feature>
<feature type="domain" description="MGS-like" evidence="1">
    <location>
        <begin position="1"/>
        <end position="140"/>
    </location>
</feature>
<feature type="active site" description="Proton donor/acceptor" evidence="1">
    <location>
        <position position="64"/>
    </location>
</feature>
<feature type="binding site" evidence="1">
    <location>
        <position position="12"/>
    </location>
    <ligand>
        <name>substrate</name>
    </ligand>
</feature>
<feature type="binding site" evidence="1">
    <location>
        <position position="16"/>
    </location>
    <ligand>
        <name>substrate</name>
    </ligand>
</feature>
<feature type="binding site" evidence="1">
    <location>
        <begin position="38"/>
        <end position="41"/>
    </location>
    <ligand>
        <name>substrate</name>
    </ligand>
</feature>
<feature type="binding site" evidence="1">
    <location>
        <begin position="58"/>
        <end position="59"/>
    </location>
    <ligand>
        <name>substrate</name>
    </ligand>
</feature>
<feature type="binding site" evidence="1">
    <location>
        <position position="91"/>
    </location>
    <ligand>
        <name>substrate</name>
    </ligand>
</feature>